<gene>
    <name evidence="1" type="primary">rpsG</name>
    <name type="ordered locus">CCNA_03305</name>
</gene>
<organism>
    <name type="scientific">Caulobacter vibrioides (strain NA1000 / CB15N)</name>
    <name type="common">Caulobacter crescentus</name>
    <dbReference type="NCBI Taxonomy" id="565050"/>
    <lineage>
        <taxon>Bacteria</taxon>
        <taxon>Pseudomonadati</taxon>
        <taxon>Pseudomonadota</taxon>
        <taxon>Alphaproteobacteria</taxon>
        <taxon>Caulobacterales</taxon>
        <taxon>Caulobacteraceae</taxon>
        <taxon>Caulobacter</taxon>
    </lineage>
</organism>
<evidence type="ECO:0000255" key="1">
    <source>
        <dbReference type="HAMAP-Rule" id="MF_00480"/>
    </source>
</evidence>
<evidence type="ECO:0000305" key="2"/>
<protein>
    <recommendedName>
        <fullName evidence="1">Small ribosomal subunit protein uS7</fullName>
    </recommendedName>
    <alternativeName>
        <fullName evidence="2">30S ribosomal protein S7</fullName>
    </alternativeName>
</protein>
<comment type="function">
    <text evidence="1">One of the primary rRNA binding proteins, it binds directly to 16S rRNA where it nucleates assembly of the head domain of the 30S subunit. Is located at the subunit interface close to the decoding center, probably blocks exit of the E-site tRNA.</text>
</comment>
<comment type="subunit">
    <text evidence="1">Part of the 30S ribosomal subunit. Contacts proteins S9 and S11.</text>
</comment>
<comment type="similarity">
    <text evidence="1">Belongs to the universal ribosomal protein uS7 family.</text>
</comment>
<accession>B8H415</accession>
<proteinExistence type="inferred from homology"/>
<keyword id="KW-1185">Reference proteome</keyword>
<keyword id="KW-0687">Ribonucleoprotein</keyword>
<keyword id="KW-0689">Ribosomal protein</keyword>
<keyword id="KW-0694">RNA-binding</keyword>
<keyword id="KW-0699">rRNA-binding</keyword>
<keyword id="KW-0820">tRNA-binding</keyword>
<reference key="1">
    <citation type="journal article" date="2010" name="J. Bacteriol.">
        <title>The genetic basis of laboratory adaptation in Caulobacter crescentus.</title>
        <authorList>
            <person name="Marks M.E."/>
            <person name="Castro-Rojas C.M."/>
            <person name="Teiling C."/>
            <person name="Du L."/>
            <person name="Kapatral V."/>
            <person name="Walunas T.L."/>
            <person name="Crosson S."/>
        </authorList>
    </citation>
    <scope>NUCLEOTIDE SEQUENCE [LARGE SCALE GENOMIC DNA]</scope>
    <source>
        <strain>NA1000 / CB15N</strain>
    </source>
</reference>
<sequence>MSRRRRAEKRQVLPDPKFGDLVVTKFMNYVMYEGKKAVAENIIYGAFDILEAKRKDQGPLETFHSALDNVAPAIEVRSRRVGGATYQVPVEVRPDRRRALAIRWLVTAARKRGENTMTEKLAGELLDASNNRGTAVKKREDTHKMAEANRAFSHYRW</sequence>
<name>RS7_CAUVN</name>
<feature type="chain" id="PRO_1000135589" description="Small ribosomal subunit protein uS7">
    <location>
        <begin position="1"/>
        <end position="157"/>
    </location>
</feature>
<dbReference type="EMBL" id="CP001340">
    <property type="protein sequence ID" value="ACL96769.1"/>
    <property type="molecule type" value="Genomic_DNA"/>
</dbReference>
<dbReference type="RefSeq" id="WP_004624018.1">
    <property type="nucleotide sequence ID" value="NC_011916.1"/>
</dbReference>
<dbReference type="RefSeq" id="YP_002518677.1">
    <property type="nucleotide sequence ID" value="NC_011916.1"/>
</dbReference>
<dbReference type="SMR" id="B8H415"/>
<dbReference type="GeneID" id="7330327"/>
<dbReference type="KEGG" id="ccs:CCNA_03305"/>
<dbReference type="PATRIC" id="fig|565050.3.peg.3224"/>
<dbReference type="HOGENOM" id="CLU_072226_1_1_5"/>
<dbReference type="OrthoDB" id="9807653at2"/>
<dbReference type="PhylomeDB" id="B8H415"/>
<dbReference type="Proteomes" id="UP000001364">
    <property type="component" value="Chromosome"/>
</dbReference>
<dbReference type="GO" id="GO:0015935">
    <property type="term" value="C:small ribosomal subunit"/>
    <property type="evidence" value="ECO:0007669"/>
    <property type="project" value="InterPro"/>
</dbReference>
<dbReference type="GO" id="GO:0019843">
    <property type="term" value="F:rRNA binding"/>
    <property type="evidence" value="ECO:0007669"/>
    <property type="project" value="UniProtKB-UniRule"/>
</dbReference>
<dbReference type="GO" id="GO:0003735">
    <property type="term" value="F:structural constituent of ribosome"/>
    <property type="evidence" value="ECO:0007669"/>
    <property type="project" value="InterPro"/>
</dbReference>
<dbReference type="GO" id="GO:0000049">
    <property type="term" value="F:tRNA binding"/>
    <property type="evidence" value="ECO:0007669"/>
    <property type="project" value="UniProtKB-UniRule"/>
</dbReference>
<dbReference type="GO" id="GO:0006412">
    <property type="term" value="P:translation"/>
    <property type="evidence" value="ECO:0007669"/>
    <property type="project" value="UniProtKB-UniRule"/>
</dbReference>
<dbReference type="CDD" id="cd14869">
    <property type="entry name" value="uS7_Bacteria"/>
    <property type="match status" value="1"/>
</dbReference>
<dbReference type="FunFam" id="1.10.455.10:FF:000001">
    <property type="entry name" value="30S ribosomal protein S7"/>
    <property type="match status" value="1"/>
</dbReference>
<dbReference type="Gene3D" id="1.10.455.10">
    <property type="entry name" value="Ribosomal protein S7 domain"/>
    <property type="match status" value="1"/>
</dbReference>
<dbReference type="HAMAP" id="MF_00480_B">
    <property type="entry name" value="Ribosomal_uS7_B"/>
    <property type="match status" value="1"/>
</dbReference>
<dbReference type="InterPro" id="IPR000235">
    <property type="entry name" value="Ribosomal_uS7"/>
</dbReference>
<dbReference type="InterPro" id="IPR005717">
    <property type="entry name" value="Ribosomal_uS7_bac/org-type"/>
</dbReference>
<dbReference type="InterPro" id="IPR020606">
    <property type="entry name" value="Ribosomal_uS7_CS"/>
</dbReference>
<dbReference type="InterPro" id="IPR023798">
    <property type="entry name" value="Ribosomal_uS7_dom"/>
</dbReference>
<dbReference type="InterPro" id="IPR036823">
    <property type="entry name" value="Ribosomal_uS7_dom_sf"/>
</dbReference>
<dbReference type="NCBIfam" id="TIGR01029">
    <property type="entry name" value="rpsG_bact"/>
    <property type="match status" value="1"/>
</dbReference>
<dbReference type="PANTHER" id="PTHR11205">
    <property type="entry name" value="RIBOSOMAL PROTEIN S7"/>
    <property type="match status" value="1"/>
</dbReference>
<dbReference type="Pfam" id="PF00177">
    <property type="entry name" value="Ribosomal_S7"/>
    <property type="match status" value="1"/>
</dbReference>
<dbReference type="PIRSF" id="PIRSF002122">
    <property type="entry name" value="RPS7p_RPS7a_RPS5e_RPS7o"/>
    <property type="match status" value="1"/>
</dbReference>
<dbReference type="SUPFAM" id="SSF47973">
    <property type="entry name" value="Ribosomal protein S7"/>
    <property type="match status" value="1"/>
</dbReference>
<dbReference type="PROSITE" id="PS00052">
    <property type="entry name" value="RIBOSOMAL_S7"/>
    <property type="match status" value="1"/>
</dbReference>